<evidence type="ECO:0000255" key="1">
    <source>
        <dbReference type="HAMAP-Rule" id="MF_00277"/>
    </source>
</evidence>
<evidence type="ECO:0000255" key="2">
    <source>
        <dbReference type="PROSITE-ProRule" id="PRU01175"/>
    </source>
</evidence>
<keyword id="KW-0378">Hydrolase</keyword>
<keyword id="KW-0460">Magnesium</keyword>
<keyword id="KW-0511">Multifunctional enzyme</keyword>
<keyword id="KW-0548">Nucleotidyltransferase</keyword>
<keyword id="KW-0677">Repeat</keyword>
<keyword id="KW-0808">Transferase</keyword>
<protein>
    <recommendedName>
        <fullName evidence="1">Bifunctional uridylyltransferase/uridylyl-removing enzyme</fullName>
        <shortName evidence="1">UTase/UR</shortName>
    </recommendedName>
    <alternativeName>
        <fullName evidence="1">Bifunctional [protein-PII] modification enzyme</fullName>
    </alternativeName>
    <alternativeName>
        <fullName evidence="1">Bifunctional nitrogen sensor protein</fullName>
    </alternativeName>
    <domain>
        <recommendedName>
            <fullName evidence="1">[Protein-PII] uridylyltransferase</fullName>
            <shortName evidence="1">PII uridylyltransferase</shortName>
            <shortName evidence="1">UTase</shortName>
            <ecNumber evidence="1">2.7.7.59</ecNumber>
        </recommendedName>
    </domain>
    <domain>
        <recommendedName>
            <fullName evidence="1">[Protein-PII]-UMP uridylyl-removing enzyme</fullName>
            <shortName evidence="1">UR</shortName>
            <ecNumber evidence="1">3.1.4.-</ecNumber>
        </recommendedName>
    </domain>
</protein>
<reference key="1">
    <citation type="submission" date="2007-12" db="EMBL/GenBank/DDBJ databases">
        <title>Brucella suis ATCC 23445 whole genome shotgun sequencing project.</title>
        <authorList>
            <person name="Setubal J.C."/>
            <person name="Bowns C."/>
            <person name="Boyle S."/>
            <person name="Crasta O.R."/>
            <person name="Czar M.J."/>
            <person name="Dharmanolla C."/>
            <person name="Gillespie J.J."/>
            <person name="Kenyon R.W."/>
            <person name="Lu J."/>
            <person name="Mane S."/>
            <person name="Mohapatra S."/>
            <person name="Nagrani S."/>
            <person name="Purkayastha A."/>
            <person name="Rajasimha H.K."/>
            <person name="Shallom J.M."/>
            <person name="Shallom S."/>
            <person name="Shukla M."/>
            <person name="Snyder E.E."/>
            <person name="Sobral B.W."/>
            <person name="Wattam A.R."/>
            <person name="Will R."/>
            <person name="Williams K."/>
            <person name="Yoo H."/>
            <person name="Bruce D."/>
            <person name="Detter C."/>
            <person name="Munk C."/>
            <person name="Brettin T.S."/>
        </authorList>
    </citation>
    <scope>NUCLEOTIDE SEQUENCE [LARGE SCALE GENOMIC DNA]</scope>
    <source>
        <strain>ATCC 23445 / NCTC 10510</strain>
    </source>
</reference>
<comment type="function">
    <text evidence="1">Modifies, by uridylylation and deuridylylation, the PII regulatory proteins (GlnB and homologs), in response to the nitrogen status of the cell that GlnD senses through the glutamine level. Under low glutamine levels, catalyzes the conversion of the PII proteins and UTP to PII-UMP and PPi, while under higher glutamine levels, GlnD hydrolyzes PII-UMP to PII and UMP (deuridylylation). Thus, controls uridylylation state and activity of the PII proteins, and plays an important role in the regulation of nitrogen assimilation and metabolism.</text>
</comment>
<comment type="catalytic activity">
    <reaction evidence="1">
        <text>[protein-PII]-L-tyrosine + UTP = [protein-PII]-uridylyl-L-tyrosine + diphosphate</text>
        <dbReference type="Rhea" id="RHEA:13673"/>
        <dbReference type="Rhea" id="RHEA-COMP:12147"/>
        <dbReference type="Rhea" id="RHEA-COMP:12148"/>
        <dbReference type="ChEBI" id="CHEBI:33019"/>
        <dbReference type="ChEBI" id="CHEBI:46398"/>
        <dbReference type="ChEBI" id="CHEBI:46858"/>
        <dbReference type="ChEBI" id="CHEBI:90602"/>
        <dbReference type="EC" id="2.7.7.59"/>
    </reaction>
</comment>
<comment type="catalytic activity">
    <reaction evidence="1">
        <text>[protein-PII]-uridylyl-L-tyrosine + H2O = [protein-PII]-L-tyrosine + UMP + H(+)</text>
        <dbReference type="Rhea" id="RHEA:48600"/>
        <dbReference type="Rhea" id="RHEA-COMP:12147"/>
        <dbReference type="Rhea" id="RHEA-COMP:12148"/>
        <dbReference type="ChEBI" id="CHEBI:15377"/>
        <dbReference type="ChEBI" id="CHEBI:15378"/>
        <dbReference type="ChEBI" id="CHEBI:46858"/>
        <dbReference type="ChEBI" id="CHEBI:57865"/>
        <dbReference type="ChEBI" id="CHEBI:90602"/>
    </reaction>
</comment>
<comment type="cofactor">
    <cofactor evidence="1">
        <name>Mg(2+)</name>
        <dbReference type="ChEBI" id="CHEBI:18420"/>
    </cofactor>
</comment>
<comment type="activity regulation">
    <text evidence="1">Uridylyltransferase (UTase) activity is inhibited by glutamine, while glutamine activates uridylyl-removing (UR) activity.</text>
</comment>
<comment type="domain">
    <text evidence="1">Has four distinct domains: an N-terminal nucleotidyltransferase (NT) domain responsible for UTase activity, a central HD domain that encodes UR activity, and two C-terminal ACT domains that seem to have a role in glutamine sensing.</text>
</comment>
<comment type="similarity">
    <text evidence="1">Belongs to the GlnD family.</text>
</comment>
<proteinExistence type="inferred from homology"/>
<feature type="chain" id="PRO_1000078804" description="Bifunctional uridylyltransferase/uridylyl-removing enzyme">
    <location>
        <begin position="1"/>
        <end position="934"/>
    </location>
</feature>
<feature type="domain" description="HD" evidence="2">
    <location>
        <begin position="496"/>
        <end position="613"/>
    </location>
</feature>
<feature type="domain" description="ACT 1" evidence="1">
    <location>
        <begin position="737"/>
        <end position="818"/>
    </location>
</feature>
<feature type="domain" description="ACT 2" evidence="1">
    <location>
        <begin position="848"/>
        <end position="931"/>
    </location>
</feature>
<feature type="region of interest" description="Uridylyltransferase">
    <location>
        <begin position="1"/>
        <end position="379"/>
    </location>
</feature>
<feature type="region of interest" description="Uridylyl-removing">
    <location>
        <begin position="380"/>
        <end position="736"/>
    </location>
</feature>
<organism>
    <name type="scientific">Brucella suis (strain ATCC 23445 / NCTC 10510)</name>
    <dbReference type="NCBI Taxonomy" id="470137"/>
    <lineage>
        <taxon>Bacteria</taxon>
        <taxon>Pseudomonadati</taxon>
        <taxon>Pseudomonadota</taxon>
        <taxon>Alphaproteobacteria</taxon>
        <taxon>Hyphomicrobiales</taxon>
        <taxon>Brucellaceae</taxon>
        <taxon>Brucella/Ochrobactrum group</taxon>
        <taxon>Brucella</taxon>
    </lineage>
</organism>
<gene>
    <name evidence="1" type="primary">glnD</name>
    <name type="ordered locus">BSUIS_A0145</name>
</gene>
<dbReference type="EC" id="2.7.7.59" evidence="1"/>
<dbReference type="EC" id="3.1.4.-" evidence="1"/>
<dbReference type="EMBL" id="CP000911">
    <property type="protein sequence ID" value="ABY37249.1"/>
    <property type="molecule type" value="Genomic_DNA"/>
</dbReference>
<dbReference type="RefSeq" id="WP_006071977.1">
    <property type="nucleotide sequence ID" value="NC_010169.1"/>
</dbReference>
<dbReference type="SMR" id="B0CIQ3"/>
<dbReference type="KEGG" id="bmt:BSUIS_A0145"/>
<dbReference type="HOGENOM" id="CLU_012833_1_0_5"/>
<dbReference type="PRO" id="PR:B0CIQ3"/>
<dbReference type="Proteomes" id="UP000008545">
    <property type="component" value="Chromosome I"/>
</dbReference>
<dbReference type="GO" id="GO:0008773">
    <property type="term" value="F:[protein-PII] uridylyltransferase activity"/>
    <property type="evidence" value="ECO:0007669"/>
    <property type="project" value="UniProtKB-UniRule"/>
</dbReference>
<dbReference type="GO" id="GO:0008081">
    <property type="term" value="F:phosphoric diester hydrolase activity"/>
    <property type="evidence" value="ECO:0007669"/>
    <property type="project" value="UniProtKB-UniRule"/>
</dbReference>
<dbReference type="GO" id="GO:0006808">
    <property type="term" value="P:regulation of nitrogen utilization"/>
    <property type="evidence" value="ECO:0007669"/>
    <property type="project" value="UniProtKB-UniRule"/>
</dbReference>
<dbReference type="CDD" id="cd04899">
    <property type="entry name" value="ACT_ACR-UUR-like_2"/>
    <property type="match status" value="1"/>
</dbReference>
<dbReference type="CDD" id="cd04900">
    <property type="entry name" value="ACT_UUR-like_1"/>
    <property type="match status" value="1"/>
</dbReference>
<dbReference type="CDD" id="cd00077">
    <property type="entry name" value="HDc"/>
    <property type="match status" value="1"/>
</dbReference>
<dbReference type="CDD" id="cd05401">
    <property type="entry name" value="NT_GlnE_GlnD_like"/>
    <property type="match status" value="1"/>
</dbReference>
<dbReference type="Gene3D" id="3.30.70.260">
    <property type="match status" value="1"/>
</dbReference>
<dbReference type="Gene3D" id="3.30.460.10">
    <property type="entry name" value="Beta Polymerase, domain 2"/>
    <property type="match status" value="1"/>
</dbReference>
<dbReference type="Gene3D" id="1.10.3090.10">
    <property type="entry name" value="cca-adding enzyme, domain 2"/>
    <property type="match status" value="1"/>
</dbReference>
<dbReference type="HAMAP" id="MF_00277">
    <property type="entry name" value="PII_uridylyl_transf"/>
    <property type="match status" value="1"/>
</dbReference>
<dbReference type="InterPro" id="IPR045865">
    <property type="entry name" value="ACT-like_dom_sf"/>
</dbReference>
<dbReference type="InterPro" id="IPR002912">
    <property type="entry name" value="ACT_dom"/>
</dbReference>
<dbReference type="InterPro" id="IPR003607">
    <property type="entry name" value="HD/PDEase_dom"/>
</dbReference>
<dbReference type="InterPro" id="IPR006674">
    <property type="entry name" value="HD_domain"/>
</dbReference>
<dbReference type="InterPro" id="IPR043519">
    <property type="entry name" value="NT_sf"/>
</dbReference>
<dbReference type="InterPro" id="IPR013546">
    <property type="entry name" value="PII_UdlTrfase/GS_AdlTrfase"/>
</dbReference>
<dbReference type="InterPro" id="IPR010043">
    <property type="entry name" value="UTase/UR"/>
</dbReference>
<dbReference type="NCBIfam" id="NF003467">
    <property type="entry name" value="PRK05092.1"/>
    <property type="match status" value="1"/>
</dbReference>
<dbReference type="NCBIfam" id="TIGR01693">
    <property type="entry name" value="UTase_glnD"/>
    <property type="match status" value="1"/>
</dbReference>
<dbReference type="PANTHER" id="PTHR47320">
    <property type="entry name" value="BIFUNCTIONAL URIDYLYLTRANSFERASE/URIDYLYL-REMOVING ENZYME"/>
    <property type="match status" value="1"/>
</dbReference>
<dbReference type="PANTHER" id="PTHR47320:SF1">
    <property type="entry name" value="BIFUNCTIONAL URIDYLYLTRANSFERASE_URIDYLYL-REMOVING ENZYME"/>
    <property type="match status" value="1"/>
</dbReference>
<dbReference type="Pfam" id="PF01842">
    <property type="entry name" value="ACT"/>
    <property type="match status" value="2"/>
</dbReference>
<dbReference type="Pfam" id="PF08335">
    <property type="entry name" value="GlnD_UR_UTase"/>
    <property type="match status" value="1"/>
</dbReference>
<dbReference type="Pfam" id="PF01966">
    <property type="entry name" value="HD"/>
    <property type="match status" value="1"/>
</dbReference>
<dbReference type="PIRSF" id="PIRSF006288">
    <property type="entry name" value="PII_uridyltransf"/>
    <property type="match status" value="1"/>
</dbReference>
<dbReference type="SMART" id="SM00471">
    <property type="entry name" value="HDc"/>
    <property type="match status" value="1"/>
</dbReference>
<dbReference type="SUPFAM" id="SSF55021">
    <property type="entry name" value="ACT-like"/>
    <property type="match status" value="2"/>
</dbReference>
<dbReference type="SUPFAM" id="SSF81301">
    <property type="entry name" value="Nucleotidyltransferase"/>
    <property type="match status" value="1"/>
</dbReference>
<dbReference type="SUPFAM" id="SSF81593">
    <property type="entry name" value="Nucleotidyltransferase substrate binding subunit/domain"/>
    <property type="match status" value="1"/>
</dbReference>
<dbReference type="SUPFAM" id="SSF81891">
    <property type="entry name" value="Poly A polymerase C-terminal region-like"/>
    <property type="match status" value="1"/>
</dbReference>
<dbReference type="PROSITE" id="PS51671">
    <property type="entry name" value="ACT"/>
    <property type="match status" value="2"/>
</dbReference>
<dbReference type="PROSITE" id="PS51831">
    <property type="entry name" value="HD"/>
    <property type="match status" value="1"/>
</dbReference>
<name>GLND_BRUSI</name>
<sequence>MSAHDLKLEEIVNAETLRRKLNELADTADESYTSLPMRKVVLQTLKDALASGRANAEDMLMKDGGGTLCAKRLCYLMDTLIDILFEFATTRTYPTRNPSKAENMALVAVGGYGRGGLAQGSDIDLLFLLPYKQTPWGEQVVEYTLYMLWDMGLKVGHSTRNIDECIRLAREDMTIRTALLDARFLTGDKDLFRTLEIRFEEEIVKGTEPEFIQAKLAERDARHRKAGETRYLVEPNVKEGKGGQRDLHTLFWITKYFYRVKTKEELVKLGVLSRAELKLFNKAEDFLWAVRCHMHFATLKAEERLSFDIQPEIAQRLGYTAHPGQNYVERFMKHYFLVAKDVGDLTRIICAALEEQQAKHVPGFNRIFLTFSRRKRKLSDDGAFISENHRINIARPDIFRQDPVNMIRLFHLADRHGLEFHPEAMQSLTRSLKLINADLRENPEANRLFLEILTSPRNPELILRRMNESGVLGKFIPDFGKIVAMMQFNMYHHYTVDEHLLRCIAVLSEIEHGELKTEHPLSNHLITTIKRDRNLLYVTLLLHDIAKGRPEDHSIAGARIARRLCPRFGLTPSETETVEWLVREHLTMSMVAQSRDLNDRKTIIDFADTVQTMERLKLLLILTVCDIKAVGPGIWNGWKGQLLRTLFYETELVLTGGFSELSRAARDKQAREALAERLSDWPKEERDAYLALPYTNYFLTVSLDDQVRHAHFIRDADQQGRALVTMAKPHAFEAVTEITVLAPDHPRLLSVITGACAAAGGNIVDAQIFTTSDGRALDTILISREFDTDDDERRRAERVGKVIEDVLSGKAHLPDMLAKRTKPKKAARAFKVEPRVEINNTLSNKFTVIEVEGLDRPGLLSELTGLISDLSLDIASAHITTFGEKVIDSFYVTDLVGHKISNATRQGNIKRKLLALLGAENGARTNGRSPQAAA</sequence>
<accession>B0CIQ3</accession>